<feature type="chain" id="PRO_0000142049" description="1-(5-phosphoribosyl)-5-[(5-phosphoribosylamino)methylideneamino] imidazole-4-carboxamide isomerase">
    <location>
        <begin position="1"/>
        <end position="245"/>
    </location>
</feature>
<feature type="active site" description="Proton acceptor" evidence="1">
    <location>
        <position position="7"/>
    </location>
</feature>
<feature type="active site" description="Proton donor" evidence="1">
    <location>
        <position position="129"/>
    </location>
</feature>
<feature type="sequence conflict" description="In Ref. 1; CAA31827." evidence="2" ref="1">
    <original>AL</original>
    <variation>GV</variation>
    <location>
        <begin position="123"/>
        <end position="124"/>
    </location>
</feature>
<feature type="sequence conflict" description="In Ref. 1; CAA31827." evidence="2" ref="1">
    <original>H</original>
    <variation>Q</variation>
    <location>
        <position position="135"/>
    </location>
</feature>
<feature type="sequence conflict" description="In Ref. 1; CAA31827." evidence="2" ref="1">
    <original>G</original>
    <variation>A</variation>
    <location>
        <position position="177"/>
    </location>
</feature>
<feature type="sequence conflict" description="In Ref. 1." evidence="2" ref="1">
    <original>I</original>
    <variation>DV</variation>
    <location>
        <position position="211"/>
    </location>
</feature>
<feature type="sequence conflict" description="In Ref. 1; CAA31827." evidence="2" ref="1">
    <original>V</original>
    <variation>M</variation>
    <location>
        <position position="222"/>
    </location>
</feature>
<feature type="strand" evidence="3">
    <location>
        <begin position="2"/>
        <end position="9"/>
    </location>
</feature>
<feature type="strand" evidence="3">
    <location>
        <begin position="12"/>
        <end position="16"/>
    </location>
</feature>
<feature type="helix" evidence="3">
    <location>
        <begin position="17"/>
        <end position="19"/>
    </location>
</feature>
<feature type="strand" evidence="3">
    <location>
        <begin position="23"/>
        <end position="26"/>
    </location>
</feature>
<feature type="helix" evidence="3">
    <location>
        <begin position="31"/>
        <end position="40"/>
    </location>
</feature>
<feature type="strand" evidence="3">
    <location>
        <begin position="46"/>
        <end position="50"/>
    </location>
</feature>
<feature type="helix" evidence="3">
    <location>
        <begin position="51"/>
        <end position="55"/>
    </location>
</feature>
<feature type="helix" evidence="3">
    <location>
        <begin position="57"/>
        <end position="59"/>
    </location>
</feature>
<feature type="helix" evidence="3">
    <location>
        <begin position="62"/>
        <end position="70"/>
    </location>
</feature>
<feature type="strand" evidence="4">
    <location>
        <begin position="72"/>
        <end position="74"/>
    </location>
</feature>
<feature type="strand" evidence="3">
    <location>
        <begin position="76"/>
        <end position="81"/>
    </location>
</feature>
<feature type="helix" evidence="3">
    <location>
        <begin position="85"/>
        <end position="93"/>
    </location>
</feature>
<feature type="strand" evidence="3">
    <location>
        <begin position="97"/>
        <end position="101"/>
    </location>
</feature>
<feature type="helix" evidence="3">
    <location>
        <begin position="103"/>
        <end position="107"/>
    </location>
</feature>
<feature type="helix" evidence="3">
    <location>
        <begin position="109"/>
        <end position="119"/>
    </location>
</feature>
<feature type="helix" evidence="3">
    <location>
        <begin position="121"/>
        <end position="123"/>
    </location>
</feature>
<feature type="strand" evidence="3">
    <location>
        <begin position="124"/>
        <end position="127"/>
    </location>
</feature>
<feature type="strand" evidence="3">
    <location>
        <begin position="130"/>
        <end position="132"/>
    </location>
</feature>
<feature type="strand" evidence="3">
    <location>
        <begin position="138"/>
        <end position="142"/>
    </location>
</feature>
<feature type="turn" evidence="3">
    <location>
        <begin position="143"/>
        <end position="146"/>
    </location>
</feature>
<feature type="strand" evidence="3">
    <location>
        <begin position="147"/>
        <end position="152"/>
    </location>
</feature>
<feature type="helix" evidence="3">
    <location>
        <begin position="153"/>
        <end position="160"/>
    </location>
</feature>
<feature type="helix" evidence="3">
    <location>
        <begin position="161"/>
        <end position="163"/>
    </location>
</feature>
<feature type="strand" evidence="3">
    <location>
        <begin position="167"/>
        <end position="172"/>
    </location>
</feature>
<feature type="turn" evidence="3">
    <location>
        <begin position="173"/>
        <end position="177"/>
    </location>
</feature>
<feature type="helix" evidence="3">
    <location>
        <begin position="184"/>
        <end position="193"/>
    </location>
</feature>
<feature type="strand" evidence="3">
    <location>
        <begin position="197"/>
        <end position="203"/>
    </location>
</feature>
<feature type="helix" evidence="3">
    <location>
        <begin position="208"/>
        <end position="212"/>
    </location>
</feature>
<feature type="turn" evidence="3">
    <location>
        <begin position="213"/>
        <end position="217"/>
    </location>
</feature>
<feature type="strand" evidence="3">
    <location>
        <begin position="220"/>
        <end position="224"/>
    </location>
</feature>
<feature type="helix" evidence="3">
    <location>
        <begin position="226"/>
        <end position="229"/>
    </location>
</feature>
<feature type="helix" evidence="3">
    <location>
        <begin position="235"/>
        <end position="244"/>
    </location>
</feature>
<organism>
    <name type="scientific">Salmonella typhimurium (strain LT2 / SGSC1412 / ATCC 700720)</name>
    <dbReference type="NCBI Taxonomy" id="99287"/>
    <lineage>
        <taxon>Bacteria</taxon>
        <taxon>Pseudomonadati</taxon>
        <taxon>Pseudomonadota</taxon>
        <taxon>Gammaproteobacteria</taxon>
        <taxon>Enterobacterales</taxon>
        <taxon>Enterobacteriaceae</taxon>
        <taxon>Salmonella</taxon>
    </lineage>
</organism>
<name>HIS4_SALTY</name>
<dbReference type="EC" id="5.3.1.16"/>
<dbReference type="EMBL" id="X13464">
    <property type="protein sequence ID" value="CAA31827.1"/>
    <property type="molecule type" value="Genomic_DNA"/>
</dbReference>
<dbReference type="EMBL" id="AE006468">
    <property type="protein sequence ID" value="AAL20980.1"/>
    <property type="molecule type" value="Genomic_DNA"/>
</dbReference>
<dbReference type="PIR" id="JS0161">
    <property type="entry name" value="ISEBIC"/>
</dbReference>
<dbReference type="RefSeq" id="NP_461021.1">
    <property type="nucleotide sequence ID" value="NC_003197.2"/>
</dbReference>
<dbReference type="RefSeq" id="WP_000586409.1">
    <property type="nucleotide sequence ID" value="NC_003197.2"/>
</dbReference>
<dbReference type="PDB" id="5A5W">
    <property type="method" value="X-ray"/>
    <property type="resolution" value="1.60 A"/>
    <property type="chains" value="A=1-245"/>
</dbReference>
<dbReference type="PDB" id="5AB3">
    <property type="method" value="X-ray"/>
    <property type="resolution" value="1.80 A"/>
    <property type="chains" value="A/B/C=1-245"/>
</dbReference>
<dbReference type="PDB" id="5ABT">
    <property type="method" value="X-ray"/>
    <property type="resolution" value="1.65 A"/>
    <property type="chains" value="A=1-245"/>
</dbReference>
<dbReference type="PDB" id="5AC6">
    <property type="method" value="X-ray"/>
    <property type="resolution" value="1.99 A"/>
    <property type="chains" value="A=1-245"/>
</dbReference>
<dbReference type="PDB" id="5AC7">
    <property type="method" value="X-ray"/>
    <property type="resolution" value="1.90 A"/>
    <property type="chains" value="A/B=1-245"/>
</dbReference>
<dbReference type="PDB" id="5AC8">
    <property type="method" value="X-ray"/>
    <property type="resolution" value="1.70 A"/>
    <property type="chains" value="A=1-245"/>
</dbReference>
<dbReference type="PDB" id="5AHE">
    <property type="method" value="X-ray"/>
    <property type="resolution" value="1.70 A"/>
    <property type="chains" value="A=1-245"/>
</dbReference>
<dbReference type="PDB" id="5AHF">
    <property type="method" value="X-ray"/>
    <property type="resolution" value="2.20 A"/>
    <property type="chains" value="A=1-245"/>
</dbReference>
<dbReference type="PDB" id="5AHI">
    <property type="method" value="X-ray"/>
    <property type="resolution" value="2.00 A"/>
    <property type="chains" value="A=1-245"/>
</dbReference>
<dbReference type="PDB" id="5G1T">
    <property type="method" value="X-ray"/>
    <property type="resolution" value="1.70 A"/>
    <property type="chains" value="A=1-245"/>
</dbReference>
<dbReference type="PDB" id="5G1Y">
    <property type="method" value="X-ray"/>
    <property type="resolution" value="1.80 A"/>
    <property type="chains" value="A=1-15, A=17-245"/>
</dbReference>
<dbReference type="PDB" id="5G2H">
    <property type="method" value="X-ray"/>
    <property type="resolution" value="1.90 A"/>
    <property type="chains" value="A=1-245"/>
</dbReference>
<dbReference type="PDB" id="5G2I">
    <property type="method" value="X-ray"/>
    <property type="resolution" value="1.60 A"/>
    <property type="chains" value="A=1-15, A=17-245"/>
</dbReference>
<dbReference type="PDB" id="5G2W">
    <property type="method" value="X-ray"/>
    <property type="resolution" value="2.10 A"/>
    <property type="chains" value="A=1-245"/>
</dbReference>
<dbReference type="PDB" id="5G4E">
    <property type="method" value="X-ray"/>
    <property type="resolution" value="2.65 A"/>
    <property type="chains" value="A/B=1-15, A/B=17-245"/>
</dbReference>
<dbReference type="PDB" id="5G4W">
    <property type="method" value="X-ray"/>
    <property type="resolution" value="2.30 A"/>
    <property type="chains" value="A=1-245"/>
</dbReference>
<dbReference type="PDB" id="5G5I">
    <property type="method" value="X-ray"/>
    <property type="resolution" value="2.00 A"/>
    <property type="chains" value="A=1-245"/>
</dbReference>
<dbReference type="PDB" id="5L6U">
    <property type="method" value="X-ray"/>
    <property type="resolution" value="1.60 A"/>
    <property type="chains" value="A=1-15, A=17-245"/>
</dbReference>
<dbReference type="PDB" id="5L9F">
    <property type="method" value="X-ray"/>
    <property type="resolution" value="2.59 A"/>
    <property type="chains" value="A/B=1-245"/>
</dbReference>
<dbReference type="PDBsum" id="5A5W"/>
<dbReference type="PDBsum" id="5AB3"/>
<dbReference type="PDBsum" id="5ABT"/>
<dbReference type="PDBsum" id="5AC6"/>
<dbReference type="PDBsum" id="5AC7"/>
<dbReference type="PDBsum" id="5AC8"/>
<dbReference type="PDBsum" id="5AHE"/>
<dbReference type="PDBsum" id="5AHF"/>
<dbReference type="PDBsum" id="5AHI"/>
<dbReference type="PDBsum" id="5G1T"/>
<dbReference type="PDBsum" id="5G1Y"/>
<dbReference type="PDBsum" id="5G2H"/>
<dbReference type="PDBsum" id="5G2I"/>
<dbReference type="PDBsum" id="5G2W"/>
<dbReference type="PDBsum" id="5G4E"/>
<dbReference type="PDBsum" id="5G4W"/>
<dbReference type="PDBsum" id="5G5I"/>
<dbReference type="PDBsum" id="5L6U"/>
<dbReference type="PDBsum" id="5L9F"/>
<dbReference type="SMR" id="P10372"/>
<dbReference type="STRING" id="99287.STM2076"/>
<dbReference type="PaxDb" id="99287-STM2076"/>
<dbReference type="GeneID" id="1253597"/>
<dbReference type="KEGG" id="stm:STM2076"/>
<dbReference type="PATRIC" id="fig|99287.12.peg.2198"/>
<dbReference type="HOGENOM" id="CLU_048577_1_2_6"/>
<dbReference type="OMA" id="EWLHLVD"/>
<dbReference type="PhylomeDB" id="P10372"/>
<dbReference type="BioCyc" id="SENT99287:STM2076-MONOMER"/>
<dbReference type="BRENDA" id="5.3.1.16">
    <property type="organism ID" value="5542"/>
</dbReference>
<dbReference type="UniPathway" id="UPA00031">
    <property type="reaction ID" value="UER00009"/>
</dbReference>
<dbReference type="EvolutionaryTrace" id="P10372"/>
<dbReference type="Proteomes" id="UP000001014">
    <property type="component" value="Chromosome"/>
</dbReference>
<dbReference type="GO" id="GO:0005737">
    <property type="term" value="C:cytoplasm"/>
    <property type="evidence" value="ECO:0000318"/>
    <property type="project" value="GO_Central"/>
</dbReference>
<dbReference type="GO" id="GO:0003949">
    <property type="term" value="F:1-(5-phosphoribosyl)-5-[(5-phosphoribosylamino)methylideneamino]imidazole-4-carboxamide isomerase activity"/>
    <property type="evidence" value="ECO:0000318"/>
    <property type="project" value="GO_Central"/>
</dbReference>
<dbReference type="GO" id="GO:0000105">
    <property type="term" value="P:L-histidine biosynthetic process"/>
    <property type="evidence" value="ECO:0000318"/>
    <property type="project" value="GO_Central"/>
</dbReference>
<dbReference type="CDD" id="cd04732">
    <property type="entry name" value="HisA"/>
    <property type="match status" value="1"/>
</dbReference>
<dbReference type="FunFam" id="3.20.20.70:FF:000009">
    <property type="entry name" value="1-(5-phosphoribosyl)-5-[(5-phosphoribosylamino)methylideneamino] imidazole-4-carboxamide isomerase"/>
    <property type="match status" value="1"/>
</dbReference>
<dbReference type="Gene3D" id="3.20.20.70">
    <property type="entry name" value="Aldolase class I"/>
    <property type="match status" value="1"/>
</dbReference>
<dbReference type="HAMAP" id="MF_01014">
    <property type="entry name" value="HisA"/>
    <property type="match status" value="1"/>
</dbReference>
<dbReference type="InterPro" id="IPR013785">
    <property type="entry name" value="Aldolase_TIM"/>
</dbReference>
<dbReference type="InterPro" id="IPR006062">
    <property type="entry name" value="His_biosynth"/>
</dbReference>
<dbReference type="InterPro" id="IPR006063">
    <property type="entry name" value="HisA_bact_arch"/>
</dbReference>
<dbReference type="InterPro" id="IPR044524">
    <property type="entry name" value="Isoase_HisA-like"/>
</dbReference>
<dbReference type="InterPro" id="IPR023016">
    <property type="entry name" value="Isoase_HisA-like_bact"/>
</dbReference>
<dbReference type="InterPro" id="IPR011060">
    <property type="entry name" value="RibuloseP-bd_barrel"/>
</dbReference>
<dbReference type="NCBIfam" id="TIGR00007">
    <property type="entry name" value="1-(5-phosphoribosyl)-5-[(5-phosphoribosylamino)methylideneamino]imidazole-4-carboxamide isomerase"/>
    <property type="match status" value="1"/>
</dbReference>
<dbReference type="PANTHER" id="PTHR43090">
    <property type="entry name" value="1-(5-PHOSPHORIBOSYL)-5-[(5-PHOSPHORIBOSYLAMINO)METHYLIDENEAMINO] IMIDAZOLE-4-CARBOXAMIDE ISOMERASE"/>
    <property type="match status" value="1"/>
</dbReference>
<dbReference type="PANTHER" id="PTHR43090:SF2">
    <property type="entry name" value="1-(5-PHOSPHORIBOSYL)-5-[(5-PHOSPHORIBOSYLAMINO)METHYLIDENEAMINO] IMIDAZOLE-4-CARBOXAMIDE ISOMERASE"/>
    <property type="match status" value="1"/>
</dbReference>
<dbReference type="Pfam" id="PF00977">
    <property type="entry name" value="His_biosynth"/>
    <property type="match status" value="1"/>
</dbReference>
<dbReference type="SUPFAM" id="SSF51366">
    <property type="entry name" value="Ribulose-phoshate binding barrel"/>
    <property type="match status" value="1"/>
</dbReference>
<reference key="1">
    <citation type="journal article" date="1988" name="J. Mol. Biol.">
        <title>Structure and function of the Salmonella typhimurium and Escherichia coli K-12 histidine operons.</title>
        <authorList>
            <person name="Carlomagno M.S."/>
            <person name="Chiariotti L."/>
            <person name="Alifano P."/>
            <person name="Nappo A.G."/>
            <person name="Bruni C.B."/>
        </authorList>
    </citation>
    <scope>NUCLEOTIDE SEQUENCE [GENOMIC DNA]</scope>
    <source>
        <strain>LT2</strain>
    </source>
</reference>
<reference key="2">
    <citation type="journal article" date="2001" name="Nature">
        <title>Complete genome sequence of Salmonella enterica serovar Typhimurium LT2.</title>
        <authorList>
            <person name="McClelland M."/>
            <person name="Sanderson K.E."/>
            <person name="Spieth J."/>
            <person name="Clifton S.W."/>
            <person name="Latreille P."/>
            <person name="Courtney L."/>
            <person name="Porwollik S."/>
            <person name="Ali J."/>
            <person name="Dante M."/>
            <person name="Du F."/>
            <person name="Hou S."/>
            <person name="Layman D."/>
            <person name="Leonard S."/>
            <person name="Nguyen C."/>
            <person name="Scott K."/>
            <person name="Holmes A."/>
            <person name="Grewal N."/>
            <person name="Mulvaney E."/>
            <person name="Ryan E."/>
            <person name="Sun H."/>
            <person name="Florea L."/>
            <person name="Miller W."/>
            <person name="Stoneking T."/>
            <person name="Nhan M."/>
            <person name="Waterston R."/>
            <person name="Wilson R.K."/>
        </authorList>
    </citation>
    <scope>NUCLEOTIDE SEQUENCE [LARGE SCALE GENOMIC DNA]</scope>
    <source>
        <strain>LT2 / SGSC1412 / ATCC 700720</strain>
    </source>
</reference>
<keyword id="KW-0002">3D-structure</keyword>
<keyword id="KW-0028">Amino-acid biosynthesis</keyword>
<keyword id="KW-0963">Cytoplasm</keyword>
<keyword id="KW-0368">Histidine biosynthesis</keyword>
<keyword id="KW-0413">Isomerase</keyword>
<keyword id="KW-1185">Reference proteome</keyword>
<evidence type="ECO:0000250" key="1"/>
<evidence type="ECO:0000305" key="2"/>
<evidence type="ECO:0007829" key="3">
    <source>
        <dbReference type="PDB" id="5A5W"/>
    </source>
</evidence>
<evidence type="ECO:0007829" key="4">
    <source>
        <dbReference type="PDB" id="5G2I"/>
    </source>
</evidence>
<gene>
    <name type="primary">hisA</name>
    <name type="ordered locus">STM2076</name>
</gene>
<accession>P10372</accession>
<sequence length="245" mass="26089">MIIPALDLIDGTVVRLHQGDYARQRDYGNDPLPRLQDYAAQGAGVLHLVDLTGAKDPAKRQIPLIKTLVAGVNVPVQVGGGVRTEEDVAALLKAGVARVVIGSTAVKSPDVVKGWFERFGAQALVLALDVRIDEHGTKQVAVSGWQENSGVSLEQLVETYLPVGLKHVLCTDISRDGTLAGSNVSLYEEVCARYPQIAFQSSGGIGDIDDIAALRGTGVRGVIVGRALLEGKFTVKEAIQCWQNV</sequence>
<proteinExistence type="evidence at protein level"/>
<protein>
    <recommendedName>
        <fullName>1-(5-phosphoribosyl)-5-[(5-phosphoribosylamino)methylideneamino] imidazole-4-carboxamide isomerase</fullName>
        <ecNumber>5.3.1.16</ecNumber>
    </recommendedName>
    <alternativeName>
        <fullName>Phosphoribosylformimino-5-aminoimidazole carboxamide ribotide isomerase</fullName>
    </alternativeName>
</protein>
<comment type="catalytic activity">
    <reaction>
        <text>1-(5-phospho-beta-D-ribosyl)-5-[(5-phospho-beta-D-ribosylamino)methylideneamino]imidazole-4-carboxamide = 5-[(5-phospho-1-deoxy-D-ribulos-1-ylimino)methylamino]-1-(5-phospho-beta-D-ribosyl)imidazole-4-carboxamide</text>
        <dbReference type="Rhea" id="RHEA:15469"/>
        <dbReference type="ChEBI" id="CHEBI:58435"/>
        <dbReference type="ChEBI" id="CHEBI:58525"/>
        <dbReference type="EC" id="5.3.1.16"/>
    </reaction>
</comment>
<comment type="pathway">
    <text>Amino-acid biosynthesis; L-histidine biosynthesis; L-histidine from 5-phospho-alpha-D-ribose 1-diphosphate: step 4/9.</text>
</comment>
<comment type="subcellular location">
    <subcellularLocation>
        <location>Cytoplasm</location>
    </subcellularLocation>
</comment>
<comment type="similarity">
    <text evidence="2">Belongs to the HisA/HisF family.</text>
</comment>